<protein>
    <recommendedName>
        <fullName>Eukaryotic translation initiation factor 4H</fullName>
        <shortName>eIF-4H</shortName>
    </recommendedName>
</protein>
<feature type="initiator methionine" description="Removed" evidence="2">
    <location>
        <position position="1"/>
    </location>
</feature>
<feature type="chain" id="PRO_0000283700" description="Eukaryotic translation initiation factor 4H">
    <location>
        <begin position="2"/>
        <end position="228"/>
    </location>
</feature>
<feature type="domain" description="RRM" evidence="4">
    <location>
        <begin position="42"/>
        <end position="118"/>
    </location>
</feature>
<feature type="region of interest" description="Disordered" evidence="5">
    <location>
        <begin position="1"/>
        <end position="41"/>
    </location>
</feature>
<feature type="region of interest" description="Disordered" evidence="5">
    <location>
        <begin position="121"/>
        <end position="228"/>
    </location>
</feature>
<feature type="compositionally biased region" description="Gly residues" evidence="5">
    <location>
        <begin position="15"/>
        <end position="29"/>
    </location>
</feature>
<feature type="compositionally biased region" description="Basic and acidic residues" evidence="5">
    <location>
        <begin position="131"/>
        <end position="143"/>
    </location>
</feature>
<feature type="compositionally biased region" description="Basic and acidic residues" evidence="5">
    <location>
        <begin position="176"/>
        <end position="187"/>
    </location>
</feature>
<feature type="compositionally biased region" description="Polar residues" evidence="5">
    <location>
        <begin position="200"/>
        <end position="210"/>
    </location>
</feature>
<feature type="compositionally biased region" description="Basic and acidic residues" evidence="5">
    <location>
        <begin position="217"/>
        <end position="228"/>
    </location>
</feature>
<feature type="modified residue" description="N-acetylalanine" evidence="2">
    <location>
        <position position="2"/>
    </location>
</feature>
<feature type="modified residue" description="Phosphoserine" evidence="2">
    <location>
        <position position="13"/>
    </location>
</feature>
<feature type="modified residue" description="Phosphoserine" evidence="2">
    <location>
        <position position="14"/>
    </location>
</feature>
<feature type="modified residue" description="Omega-N-methylarginine" evidence="3">
    <location>
        <position position="19"/>
    </location>
</feature>
<feature type="modified residue" description="Phosphoserine" evidence="2">
    <location>
        <position position="21"/>
    </location>
</feature>
<feature type="modified residue" description="Omega-N-methylarginine" evidence="3">
    <location>
        <position position="22"/>
    </location>
</feature>
<feature type="modified residue" description="Phosphoserine" evidence="2">
    <location>
        <position position="24"/>
    </location>
</feature>
<feature type="modified residue" description="Phosphoserine" evidence="2">
    <location>
        <position position="32"/>
    </location>
</feature>
<feature type="modified residue" description="Omega-N-methylarginine" evidence="3">
    <location>
        <position position="136"/>
    </location>
</feature>
<feature type="modified residue" description="Omega-N-methylarginine" evidence="2">
    <location>
        <position position="146"/>
    </location>
</feature>
<feature type="modified residue" description="Omega-N-methylarginine" evidence="3">
    <location>
        <position position="155"/>
    </location>
</feature>
<feature type="modified residue" description="Phosphoserine" evidence="2">
    <location>
        <position position="210"/>
    </location>
</feature>
<gene>
    <name type="primary">EIF4H</name>
</gene>
<accession>Q1JPH6</accession>
<accession>A5D959</accession>
<proteinExistence type="evidence at transcript level"/>
<reference key="1">
    <citation type="journal article" date="2005" name="BMC Genomics">
        <title>Characterization of 954 bovine full-CDS cDNA sequences.</title>
        <authorList>
            <person name="Harhay G.P."/>
            <person name="Sonstegard T.S."/>
            <person name="Keele J.W."/>
            <person name="Heaton M.P."/>
            <person name="Clawson M.L."/>
            <person name="Snelling W.M."/>
            <person name="Wiedmann R.T."/>
            <person name="Van Tassell C.P."/>
            <person name="Smith T.P.L."/>
        </authorList>
    </citation>
    <scope>NUCLEOTIDE SEQUENCE [LARGE SCALE MRNA]</scope>
</reference>
<comment type="function">
    <text evidence="1">Stimulates the RNA helicase activity of EIF4A in the translation initiation complex. Binds weakly mRNA (By similarity).</text>
</comment>
<comment type="subcellular location">
    <subcellularLocation>
        <location evidence="1">Cytoplasm</location>
        <location evidence="1">Perinuclear region</location>
    </subcellularLocation>
</comment>
<organism>
    <name type="scientific">Bos taurus</name>
    <name type="common">Bovine</name>
    <dbReference type="NCBI Taxonomy" id="9913"/>
    <lineage>
        <taxon>Eukaryota</taxon>
        <taxon>Metazoa</taxon>
        <taxon>Chordata</taxon>
        <taxon>Craniata</taxon>
        <taxon>Vertebrata</taxon>
        <taxon>Euteleostomi</taxon>
        <taxon>Mammalia</taxon>
        <taxon>Eutheria</taxon>
        <taxon>Laurasiatheria</taxon>
        <taxon>Artiodactyla</taxon>
        <taxon>Ruminantia</taxon>
        <taxon>Pecora</taxon>
        <taxon>Bovidae</taxon>
        <taxon>Bovinae</taxon>
        <taxon>Bos</taxon>
    </lineage>
</organism>
<name>IF4H_BOVIN</name>
<keyword id="KW-0007">Acetylation</keyword>
<keyword id="KW-0963">Cytoplasm</keyword>
<keyword id="KW-0396">Initiation factor</keyword>
<keyword id="KW-0488">Methylation</keyword>
<keyword id="KW-0597">Phosphoprotein</keyword>
<keyword id="KW-0648">Protein biosynthesis</keyword>
<keyword id="KW-1185">Reference proteome</keyword>
<keyword id="KW-0694">RNA-binding</keyword>
<dbReference type="EMBL" id="BT025377">
    <property type="protein sequence ID" value="ABF57333.1"/>
    <property type="molecule type" value="mRNA"/>
</dbReference>
<dbReference type="EMBL" id="BT030478">
    <property type="protein sequence ID" value="ABQ12918.1"/>
    <property type="molecule type" value="mRNA"/>
</dbReference>
<dbReference type="RefSeq" id="NP_001069220.1">
    <property type="nucleotide sequence ID" value="NM_001075752.1"/>
</dbReference>
<dbReference type="SMR" id="Q1JPH6"/>
<dbReference type="FunCoup" id="Q1JPH6">
    <property type="interactions" value="3249"/>
</dbReference>
<dbReference type="STRING" id="9913.ENSBTAP00000054254"/>
<dbReference type="PaxDb" id="9913-ENSBTAP00000054254"/>
<dbReference type="PeptideAtlas" id="Q1JPH6"/>
<dbReference type="GeneID" id="517409"/>
<dbReference type="KEGG" id="bta:517409"/>
<dbReference type="CTD" id="7458"/>
<dbReference type="eggNOG" id="KOG0118">
    <property type="taxonomic scope" value="Eukaryota"/>
</dbReference>
<dbReference type="HOGENOM" id="CLU_046195_1_0_1"/>
<dbReference type="InParanoid" id="Q1JPH6"/>
<dbReference type="OrthoDB" id="48651at2759"/>
<dbReference type="Proteomes" id="UP000009136">
    <property type="component" value="Unplaced"/>
</dbReference>
<dbReference type="GO" id="GO:0048471">
    <property type="term" value="C:perinuclear region of cytoplasm"/>
    <property type="evidence" value="ECO:0007669"/>
    <property type="project" value="UniProtKB-SubCell"/>
</dbReference>
<dbReference type="GO" id="GO:0043024">
    <property type="term" value="F:ribosomal small subunit binding"/>
    <property type="evidence" value="ECO:0000318"/>
    <property type="project" value="GO_Central"/>
</dbReference>
<dbReference type="GO" id="GO:0033592">
    <property type="term" value="F:RNA strand annealing activity"/>
    <property type="evidence" value="ECO:0000318"/>
    <property type="project" value="GO_Central"/>
</dbReference>
<dbReference type="GO" id="GO:0034057">
    <property type="term" value="F:RNA strand-exchange activity"/>
    <property type="evidence" value="ECO:0000318"/>
    <property type="project" value="GO_Central"/>
</dbReference>
<dbReference type="GO" id="GO:0003743">
    <property type="term" value="F:translation initiation factor activity"/>
    <property type="evidence" value="ECO:0007669"/>
    <property type="project" value="UniProtKB-KW"/>
</dbReference>
<dbReference type="GO" id="GO:0097010">
    <property type="term" value="P:eukaryotic translation initiation factor 4F complex assembly"/>
    <property type="evidence" value="ECO:0000318"/>
    <property type="project" value="GO_Central"/>
</dbReference>
<dbReference type="GO" id="GO:0001731">
    <property type="term" value="P:formation of translation preinitiation complex"/>
    <property type="evidence" value="ECO:0000318"/>
    <property type="project" value="GO_Central"/>
</dbReference>
<dbReference type="CDD" id="cd12401">
    <property type="entry name" value="RRM_eIF4H"/>
    <property type="match status" value="1"/>
</dbReference>
<dbReference type="FunFam" id="3.30.70.330:FF:000115">
    <property type="entry name" value="eukaryotic translation initiation factor 4H"/>
    <property type="match status" value="1"/>
</dbReference>
<dbReference type="Gene3D" id="3.30.70.330">
    <property type="match status" value="1"/>
</dbReference>
<dbReference type="InterPro" id="IPR034229">
    <property type="entry name" value="eIF4H_RRM"/>
</dbReference>
<dbReference type="InterPro" id="IPR012677">
    <property type="entry name" value="Nucleotide-bd_a/b_plait_sf"/>
</dbReference>
<dbReference type="InterPro" id="IPR035979">
    <property type="entry name" value="RBD_domain_sf"/>
</dbReference>
<dbReference type="InterPro" id="IPR000504">
    <property type="entry name" value="RRM_dom"/>
</dbReference>
<dbReference type="PANTHER" id="PTHR23236">
    <property type="entry name" value="EUKARYOTIC TRANSLATION INITIATION FACTOR 4B/4H"/>
    <property type="match status" value="1"/>
</dbReference>
<dbReference type="PANTHER" id="PTHR23236:SF11">
    <property type="entry name" value="EUKARYOTIC TRANSLATION INITIATION FACTOR 4H"/>
    <property type="match status" value="1"/>
</dbReference>
<dbReference type="Pfam" id="PF00076">
    <property type="entry name" value="RRM_1"/>
    <property type="match status" value="1"/>
</dbReference>
<dbReference type="SMART" id="SM00360">
    <property type="entry name" value="RRM"/>
    <property type="match status" value="1"/>
</dbReference>
<dbReference type="SUPFAM" id="SSF54928">
    <property type="entry name" value="RNA-binding domain, RBD"/>
    <property type="match status" value="1"/>
</dbReference>
<dbReference type="PROSITE" id="PS50102">
    <property type="entry name" value="RRM"/>
    <property type="match status" value="1"/>
</dbReference>
<evidence type="ECO:0000250" key="1"/>
<evidence type="ECO:0000250" key="2">
    <source>
        <dbReference type="UniProtKB" id="Q15056"/>
    </source>
</evidence>
<evidence type="ECO:0000250" key="3">
    <source>
        <dbReference type="UniProtKB" id="Q9WUK2"/>
    </source>
</evidence>
<evidence type="ECO:0000255" key="4">
    <source>
        <dbReference type="PROSITE-ProRule" id="PRU00176"/>
    </source>
</evidence>
<evidence type="ECO:0000256" key="5">
    <source>
        <dbReference type="SAM" id="MobiDB-lite"/>
    </source>
</evidence>
<sequence>MADFDTYDDRAYSSFGGGRGSRGSAGGHGSRSQKELPTEPPYTAYVGNLPFNTVQGDIDAIFKDLSIRSVRLVRDKDTDKFKGFCYVEFDEVDSLKEALTYDGALLGDRSLRVDIAEGRKQDKGGFGFRKGGPDDRGFRDDFLGGRGGSRPGDRRTGPPMGSRFRDGPPLRGPNMDFREPTEEERAQRPRLQLKPRTVATPLNQVANPNSAIFGGARPREEVVHKEQE</sequence>